<accession>Q99VW1</accession>
<protein>
    <recommendedName>
        <fullName>Sensor histidine kinase GraS</fullName>
        <ecNumber>2.7.13.3</ecNumber>
    </recommendedName>
    <alternativeName>
        <fullName>Glycopeptide resistance-associated protein S</fullName>
    </alternativeName>
</protein>
<evidence type="ECO:0000250" key="1">
    <source>
        <dbReference type="UniProtKB" id="Q2G0D9"/>
    </source>
</evidence>
<evidence type="ECO:0000255" key="2"/>
<evidence type="ECO:0000255" key="3">
    <source>
        <dbReference type="PROSITE-ProRule" id="PRU00107"/>
    </source>
</evidence>
<evidence type="ECO:0000305" key="4"/>
<gene>
    <name type="primary">graS</name>
    <name type="ordered locus">SAV0660</name>
</gene>
<proteinExistence type="evidence at protein level"/>
<name>GRAS_STAAM</name>
<sequence>MNNLKWVAYFLKSRMNWIFWILFLNLLMLGISLIDYDFPIDSLFYIVSLNLSLTMIFLILTYFKEVKLYKHFDKDKEIEEIKHKDLAETPFQRHTVDYLYRQISAHKEKVVEQQLQLNMHEQTITEFVHDIKTPVTAMKLLIDQEKNQERKQALLYEWSRINSMLDTQLYITRLESQRKDMYFDYVSLKRMVIDEIQLTRHISQVKGIGFDVDFKVDDYVYTDTKWCRMIIRQILSNALKYSENFNIEIGTELNDQHVSLYIKDYGRGISKKDMPRIFERGFTSTANRNETTSSGMGLYLVNSVKDQLGIHLQVTSTVGKGTTVRLIFPLQNEIVERMSEVTNLSF</sequence>
<dbReference type="EC" id="2.7.13.3"/>
<dbReference type="EMBL" id="BA000017">
    <property type="protein sequence ID" value="BAB56822.1"/>
    <property type="molecule type" value="Genomic_DNA"/>
</dbReference>
<dbReference type="RefSeq" id="WP_001061264.1">
    <property type="nucleotide sequence ID" value="NC_002758.2"/>
</dbReference>
<dbReference type="SMR" id="Q99VW1"/>
<dbReference type="KEGG" id="sav:SAV0660"/>
<dbReference type="HOGENOM" id="CLU_000445_13_1_9"/>
<dbReference type="PhylomeDB" id="Q99VW1"/>
<dbReference type="Proteomes" id="UP000002481">
    <property type="component" value="Chromosome"/>
</dbReference>
<dbReference type="GO" id="GO:0005886">
    <property type="term" value="C:plasma membrane"/>
    <property type="evidence" value="ECO:0007669"/>
    <property type="project" value="UniProtKB-SubCell"/>
</dbReference>
<dbReference type="GO" id="GO:0005524">
    <property type="term" value="F:ATP binding"/>
    <property type="evidence" value="ECO:0007669"/>
    <property type="project" value="UniProtKB-KW"/>
</dbReference>
<dbReference type="GO" id="GO:0004721">
    <property type="term" value="F:phosphoprotein phosphatase activity"/>
    <property type="evidence" value="ECO:0007669"/>
    <property type="project" value="TreeGrafter"/>
</dbReference>
<dbReference type="GO" id="GO:0000155">
    <property type="term" value="F:phosphorelay sensor kinase activity"/>
    <property type="evidence" value="ECO:0007669"/>
    <property type="project" value="InterPro"/>
</dbReference>
<dbReference type="GO" id="GO:0016036">
    <property type="term" value="P:cellular response to phosphate starvation"/>
    <property type="evidence" value="ECO:0007669"/>
    <property type="project" value="TreeGrafter"/>
</dbReference>
<dbReference type="GO" id="GO:0046677">
    <property type="term" value="P:response to antibiotic"/>
    <property type="evidence" value="ECO:0007669"/>
    <property type="project" value="UniProtKB-KW"/>
</dbReference>
<dbReference type="Gene3D" id="3.30.565.10">
    <property type="entry name" value="Histidine kinase-like ATPase, C-terminal domain"/>
    <property type="match status" value="1"/>
</dbReference>
<dbReference type="InterPro" id="IPR050351">
    <property type="entry name" value="2-comp_sensor_kinase"/>
</dbReference>
<dbReference type="InterPro" id="IPR036890">
    <property type="entry name" value="HATPase_C_sf"/>
</dbReference>
<dbReference type="InterPro" id="IPR005467">
    <property type="entry name" value="His_kinase_dom"/>
</dbReference>
<dbReference type="InterPro" id="IPR036097">
    <property type="entry name" value="HisK_dim/P_sf"/>
</dbReference>
<dbReference type="InterPro" id="IPR004358">
    <property type="entry name" value="Sig_transdc_His_kin-like_C"/>
</dbReference>
<dbReference type="PANTHER" id="PTHR45453:SF2">
    <property type="entry name" value="HISTIDINE KINASE"/>
    <property type="match status" value="1"/>
</dbReference>
<dbReference type="PANTHER" id="PTHR45453">
    <property type="entry name" value="PHOSPHATE REGULON SENSOR PROTEIN PHOR"/>
    <property type="match status" value="1"/>
</dbReference>
<dbReference type="Pfam" id="PF02518">
    <property type="entry name" value="HATPase_c"/>
    <property type="match status" value="1"/>
</dbReference>
<dbReference type="PRINTS" id="PR00344">
    <property type="entry name" value="BCTRLSENSOR"/>
</dbReference>
<dbReference type="SMART" id="SM00387">
    <property type="entry name" value="HATPase_c"/>
    <property type="match status" value="1"/>
</dbReference>
<dbReference type="SUPFAM" id="SSF55874">
    <property type="entry name" value="ATPase domain of HSP90 chaperone/DNA topoisomerase II/histidine kinase"/>
    <property type="match status" value="1"/>
</dbReference>
<dbReference type="SUPFAM" id="SSF47384">
    <property type="entry name" value="Homodimeric domain of signal transducing histidine kinase"/>
    <property type="match status" value="1"/>
</dbReference>
<dbReference type="PROSITE" id="PS50109">
    <property type="entry name" value="HIS_KIN"/>
    <property type="match status" value="1"/>
</dbReference>
<comment type="function">
    <text evidence="1">Member of the two-component regulatory system GraR/GraS involved in resistance against cationic antimicrobial peptides (CAMPs). Functions as a sensor protein kinase which phosphorylates GraR through the auxiliary protein GraX. In turn, GraR up-regulates many genes such as adhesins, exoproteins, transporters, toxins, and proteins involved in cell wall synthesis. Down-regulates the expression of many genes involved in RNA and amino acid synthesis or glycolysis.</text>
</comment>
<comment type="catalytic activity">
    <reaction>
        <text>ATP + protein L-histidine = ADP + protein N-phospho-L-histidine.</text>
        <dbReference type="EC" id="2.7.13.3"/>
    </reaction>
</comment>
<comment type="subunit">
    <text evidence="1">Interacts with GraX.</text>
</comment>
<comment type="subcellular location">
    <subcellularLocation>
        <location evidence="4">Cell membrane</location>
        <topology evidence="4">Multi-pass membrane protein</topology>
    </subcellularLocation>
</comment>
<organism>
    <name type="scientific">Staphylococcus aureus (strain Mu50 / ATCC 700699)</name>
    <dbReference type="NCBI Taxonomy" id="158878"/>
    <lineage>
        <taxon>Bacteria</taxon>
        <taxon>Bacillati</taxon>
        <taxon>Bacillota</taxon>
        <taxon>Bacilli</taxon>
        <taxon>Bacillales</taxon>
        <taxon>Staphylococcaceae</taxon>
        <taxon>Staphylococcus</taxon>
    </lineage>
</organism>
<keyword id="KW-0046">Antibiotic resistance</keyword>
<keyword id="KW-0067">ATP-binding</keyword>
<keyword id="KW-1003">Cell membrane</keyword>
<keyword id="KW-0418">Kinase</keyword>
<keyword id="KW-0472">Membrane</keyword>
<keyword id="KW-0547">Nucleotide-binding</keyword>
<keyword id="KW-0808">Transferase</keyword>
<keyword id="KW-0812">Transmembrane</keyword>
<keyword id="KW-1133">Transmembrane helix</keyword>
<keyword id="KW-0902">Two-component regulatory system</keyword>
<keyword id="KW-0843">Virulence</keyword>
<feature type="chain" id="PRO_0000347920" description="Sensor histidine kinase GraS">
    <location>
        <begin position="1"/>
        <end position="346"/>
    </location>
</feature>
<feature type="transmembrane region" description="Helical" evidence="2">
    <location>
        <begin position="15"/>
        <end position="35"/>
    </location>
</feature>
<feature type="transmembrane region" description="Helical" evidence="2">
    <location>
        <begin position="43"/>
        <end position="63"/>
    </location>
</feature>
<feature type="domain" description="Histidine kinase" evidence="3">
    <location>
        <begin position="126"/>
        <end position="332"/>
    </location>
</feature>
<reference key="1">
    <citation type="journal article" date="2001" name="Lancet">
        <title>Whole genome sequencing of meticillin-resistant Staphylococcus aureus.</title>
        <authorList>
            <person name="Kuroda M."/>
            <person name="Ohta T."/>
            <person name="Uchiyama I."/>
            <person name="Baba T."/>
            <person name="Yuzawa H."/>
            <person name="Kobayashi I."/>
            <person name="Cui L."/>
            <person name="Oguchi A."/>
            <person name="Aoki K."/>
            <person name="Nagai Y."/>
            <person name="Lian J.-Q."/>
            <person name="Ito T."/>
            <person name="Kanamori M."/>
            <person name="Matsumaru H."/>
            <person name="Maruyama A."/>
            <person name="Murakami H."/>
            <person name="Hosoyama A."/>
            <person name="Mizutani-Ui Y."/>
            <person name="Takahashi N.K."/>
            <person name="Sawano T."/>
            <person name="Inoue R."/>
            <person name="Kaito C."/>
            <person name="Sekimizu K."/>
            <person name="Hirakawa H."/>
            <person name="Kuhara S."/>
            <person name="Goto S."/>
            <person name="Yabuzaki J."/>
            <person name="Kanehisa M."/>
            <person name="Yamashita A."/>
            <person name="Oshima K."/>
            <person name="Furuya K."/>
            <person name="Yoshino C."/>
            <person name="Shiba T."/>
            <person name="Hattori M."/>
            <person name="Ogasawara N."/>
            <person name="Hayashi H."/>
            <person name="Hiramatsu K."/>
        </authorList>
    </citation>
    <scope>NUCLEOTIDE SEQUENCE [LARGE SCALE GENOMIC DNA]</scope>
    <source>
        <strain>Mu50 / ATCC 700699</strain>
    </source>
</reference>
<reference key="2">
    <citation type="journal article" date="2007" name="Antimicrob. Agents Chemother.">
        <title>Interaction of the graRS two-component system with the vraFG ABC transporter to support vancomycin-intermediate resistance in Staphylococcus aureus.</title>
        <authorList>
            <person name="Meehl M."/>
            <person name="Herbert S."/>
            <person name="Goetz F."/>
            <person name="Cheung A."/>
        </authorList>
    </citation>
    <scope>FUNCTION IN CATIONIC ANTIMICROBIAL PEPTIDE RESISTANCE</scope>
</reference>